<protein>
    <recommendedName>
        <fullName>Snaclec A5</fullName>
    </recommendedName>
    <alternativeName>
        <fullName>C-type lectin A5</fullName>
    </alternativeName>
</protein>
<evidence type="ECO:0000250" key="1"/>
<evidence type="ECO:0000255" key="2">
    <source>
        <dbReference type="PROSITE-ProRule" id="PRU00040"/>
    </source>
</evidence>
<evidence type="ECO:0000305" key="3"/>
<name>SLA5_MACLB</name>
<keyword id="KW-1015">Disulfide bond</keyword>
<keyword id="KW-1199">Hemostasis impairing toxin</keyword>
<keyword id="KW-0964">Secreted</keyword>
<keyword id="KW-0732">Signal</keyword>
<keyword id="KW-0800">Toxin</keyword>
<reference key="1">
    <citation type="journal article" date="2009" name="Toxicon">
        <title>C-type lectin protein isoforms of Macrovipera lebetina: cDNA cloning and genetic diversity.</title>
        <authorList>
            <person name="Jebali J."/>
            <person name="Bazaa A."/>
            <person name="Sarray S."/>
            <person name="Benhaj K."/>
            <person name="Karboul A."/>
            <person name="El Ayeb M."/>
            <person name="Marrakchi N."/>
            <person name="Gargouri A."/>
        </authorList>
    </citation>
    <scope>NUCLEOTIDE SEQUENCE [MRNA]</scope>
</reference>
<dbReference type="EMBL" id="EU085457">
    <property type="protein sequence ID" value="ABW82667.1"/>
    <property type="molecule type" value="mRNA"/>
</dbReference>
<dbReference type="SMR" id="B4XSZ5"/>
<dbReference type="GO" id="GO:0005576">
    <property type="term" value="C:extracellular region"/>
    <property type="evidence" value="ECO:0007669"/>
    <property type="project" value="UniProtKB-SubCell"/>
</dbReference>
<dbReference type="GO" id="GO:0090729">
    <property type="term" value="F:toxin activity"/>
    <property type="evidence" value="ECO:0007669"/>
    <property type="project" value="UniProtKB-KW"/>
</dbReference>
<dbReference type="FunFam" id="3.10.100.10:FF:000087">
    <property type="entry name" value="Snaclec rhodocetin subunit delta"/>
    <property type="match status" value="1"/>
</dbReference>
<dbReference type="Gene3D" id="3.10.100.10">
    <property type="entry name" value="Mannose-Binding Protein A, subunit A"/>
    <property type="match status" value="1"/>
</dbReference>
<dbReference type="InterPro" id="IPR001304">
    <property type="entry name" value="C-type_lectin-like"/>
</dbReference>
<dbReference type="InterPro" id="IPR016186">
    <property type="entry name" value="C-type_lectin-like/link_sf"/>
</dbReference>
<dbReference type="InterPro" id="IPR050111">
    <property type="entry name" value="C-type_lectin/snaclec_domain"/>
</dbReference>
<dbReference type="InterPro" id="IPR018378">
    <property type="entry name" value="C-type_lectin_CS"/>
</dbReference>
<dbReference type="InterPro" id="IPR016187">
    <property type="entry name" value="CTDL_fold"/>
</dbReference>
<dbReference type="PANTHER" id="PTHR22803">
    <property type="entry name" value="MANNOSE, PHOSPHOLIPASE, LECTIN RECEPTOR RELATED"/>
    <property type="match status" value="1"/>
</dbReference>
<dbReference type="Pfam" id="PF00059">
    <property type="entry name" value="Lectin_C"/>
    <property type="match status" value="1"/>
</dbReference>
<dbReference type="SMART" id="SM00034">
    <property type="entry name" value="CLECT"/>
    <property type="match status" value="1"/>
</dbReference>
<dbReference type="SUPFAM" id="SSF56436">
    <property type="entry name" value="C-type lectin-like"/>
    <property type="match status" value="1"/>
</dbReference>
<dbReference type="PROSITE" id="PS00615">
    <property type="entry name" value="C_TYPE_LECTIN_1"/>
    <property type="match status" value="1"/>
</dbReference>
<dbReference type="PROSITE" id="PS50041">
    <property type="entry name" value="C_TYPE_LECTIN_2"/>
    <property type="match status" value="1"/>
</dbReference>
<sequence length="156" mass="17838">MGRSISVSFGLLVVFLSLSGTGADQDCLPGWSSHEGHCYKVFNLDKTWEDAEKFCTEQANSGHLVSIDSKKEANFVAELVSQNIKETRRTDFVWIGLRAEDKRQHCSSEWSDGSSINYQNWIEAESKKCLGLEKQTRYRKWVNLNCGKPYRFTCEI</sequence>
<comment type="function">
    <text evidence="1">Interferes with one step of hemostasis (modulation of platelet aggregation, or coagulation cascade, for example).</text>
</comment>
<comment type="subunit">
    <text evidence="1">Heterodimer; disulfide-linked.</text>
</comment>
<comment type="subcellular location">
    <subcellularLocation>
        <location evidence="1">Secreted</location>
    </subcellularLocation>
</comment>
<comment type="tissue specificity">
    <text>Expressed by the venom gland.</text>
</comment>
<comment type="miscellaneous">
    <text>Shows greater sequence similarity to the alpha than beta subunits compared to other heterodimer snaclecs.</text>
</comment>
<comment type="similarity">
    <text evidence="3">Belongs to the snaclec family.</text>
</comment>
<feature type="signal peptide" evidence="1">
    <location>
        <begin position="1"/>
        <end position="23"/>
    </location>
</feature>
<feature type="chain" id="PRO_0000356321" description="Snaclec A5">
    <location>
        <begin position="24"/>
        <end position="156"/>
    </location>
</feature>
<feature type="domain" description="C-type lectin" evidence="2">
    <location>
        <begin position="34"/>
        <end position="155"/>
    </location>
</feature>
<feature type="disulfide bond" evidence="2">
    <location>
        <begin position="27"/>
        <end position="38"/>
    </location>
</feature>
<feature type="disulfide bond" evidence="2">
    <location>
        <begin position="55"/>
        <end position="154"/>
    </location>
</feature>
<feature type="disulfide bond" description="Interchain" evidence="2">
    <location>
        <position position="106"/>
    </location>
</feature>
<feature type="disulfide bond" evidence="2">
    <location>
        <begin position="129"/>
        <end position="146"/>
    </location>
</feature>
<organism>
    <name type="scientific">Macrovipera lebetinus</name>
    <name type="common">Levantine viper</name>
    <name type="synonym">Vipera lebetina</name>
    <dbReference type="NCBI Taxonomy" id="3148341"/>
    <lineage>
        <taxon>Eukaryota</taxon>
        <taxon>Metazoa</taxon>
        <taxon>Chordata</taxon>
        <taxon>Craniata</taxon>
        <taxon>Vertebrata</taxon>
        <taxon>Euteleostomi</taxon>
        <taxon>Lepidosauria</taxon>
        <taxon>Squamata</taxon>
        <taxon>Bifurcata</taxon>
        <taxon>Unidentata</taxon>
        <taxon>Episquamata</taxon>
        <taxon>Toxicofera</taxon>
        <taxon>Serpentes</taxon>
        <taxon>Colubroidea</taxon>
        <taxon>Viperidae</taxon>
        <taxon>Viperinae</taxon>
        <taxon>Macrovipera</taxon>
    </lineage>
</organism>
<proteinExistence type="evidence at transcript level"/>
<accession>B4XSZ5</accession>